<keyword id="KW-1232">Capsid decoration protein</keyword>
<keyword id="KW-0167">Capsid protein</keyword>
<keyword id="KW-1048">Host nucleus</keyword>
<keyword id="KW-0426">Late protein</keyword>
<keyword id="KW-0597">Phosphoprotein</keyword>
<keyword id="KW-0231">Viral genome packaging</keyword>
<keyword id="KW-1188">Viral release from host cell</keyword>
<keyword id="KW-0946">Virion</keyword>
<dbReference type="EMBL" id="U95843">
    <property type="protein sequence ID" value="AAB53753.1"/>
    <property type="molecule type" value="Genomic_DNA"/>
</dbReference>
<dbReference type="SMR" id="O10438"/>
<dbReference type="GO" id="GO:0042025">
    <property type="term" value="C:host cell nucleus"/>
    <property type="evidence" value="ECO:0007669"/>
    <property type="project" value="UniProtKB-SubCell"/>
</dbReference>
<dbReference type="GO" id="GO:0098021">
    <property type="term" value="C:viral capsid, decoration"/>
    <property type="evidence" value="ECO:0007669"/>
    <property type="project" value="UniProtKB-UniRule"/>
</dbReference>
<dbReference type="Gene3D" id="1.20.120.1500">
    <property type="entry name" value="Pre-hexon-linking protein IIIa"/>
    <property type="match status" value="1"/>
</dbReference>
<dbReference type="HAMAP" id="MF_04047">
    <property type="entry name" value="ADV_CAP3"/>
    <property type="match status" value="1"/>
</dbReference>
<dbReference type="InterPro" id="IPR003479">
    <property type="entry name" value="Hex_IIIa"/>
</dbReference>
<dbReference type="InterPro" id="IPR043053">
    <property type="entry name" value="Hex_IIIa_N"/>
</dbReference>
<dbReference type="Pfam" id="PF02455">
    <property type="entry name" value="Hex_IIIa"/>
    <property type="match status" value="1"/>
</dbReference>
<evidence type="ECO:0000250" key="1">
    <source>
        <dbReference type="UniProtKB" id="P03279"/>
    </source>
</evidence>
<evidence type="ECO:0000250" key="2">
    <source>
        <dbReference type="UniProtKB" id="P12537"/>
    </source>
</evidence>
<evidence type="ECO:0000255" key="3">
    <source>
        <dbReference type="HAMAP-Rule" id="MF_04047"/>
    </source>
</evidence>
<evidence type="ECO:0000305" key="4"/>
<name>CAP3_ADEM1</name>
<organism>
    <name type="scientific">Murine adenovirus A serotype 1</name>
    <name type="common">MAdV-1</name>
    <name type="synonym">Murine adenovirus 1</name>
    <dbReference type="NCBI Taxonomy" id="10530"/>
    <lineage>
        <taxon>Viruses</taxon>
        <taxon>Varidnaviria</taxon>
        <taxon>Bamfordvirae</taxon>
        <taxon>Preplasmiviricota</taxon>
        <taxon>Tectiliviricetes</taxon>
        <taxon>Rowavirales</taxon>
        <taxon>Adenoviridae</taxon>
        <taxon>Mastadenovirus</taxon>
        <taxon>Murine mastadenovirus A</taxon>
    </lineage>
</organism>
<reference key="1">
    <citation type="submission" date="1997-05" db="EMBL/GenBank/DDBJ databases">
        <authorList>
            <person name="Meissner J.D."/>
            <person name="Hirsch G.N."/>
            <person name="Larue E.A."/>
            <person name="Fulcher R.A."/>
            <person name="Spindler K.R."/>
        </authorList>
    </citation>
    <scope>NUCLEOTIDE SEQUENCE [GENOMIC DNA]</scope>
</reference>
<organismHost>
    <name type="scientific">Mus musculus</name>
    <name type="common">Mouse</name>
    <dbReference type="NCBI Taxonomy" id="10090"/>
</organismHost>
<protein>
    <recommendedName>
        <fullName evidence="3">Pre-hexon-linking protein IIIa</fullName>
    </recommendedName>
    <alternativeName>
        <fullName evidence="3">Capsid vertex-specific component IIIa</fullName>
        <shortName evidence="3">CVSC</shortName>
    </alternativeName>
    <alternativeName>
        <fullName evidence="3">Protein IIIa</fullName>
    </alternativeName>
    <alternativeName>
        <fullName evidence="3">pIIIa</fullName>
    </alternativeName>
    <component>
        <recommendedName>
            <fullName evidence="3">Hexon-linking protein IIIa</fullName>
        </recommendedName>
    </component>
</protein>
<accession>O10438</accession>
<proteinExistence type="inferred from homology"/>
<sequence>MAALSPTVRAALQSQAAGEEPWEQRFKRIMSTTLKNPGAFRSQPWFTRRDAILEAVLPSRTDPTHEKVLAVVNGLVQAKAVRADEGGAIYDALLQRVGRYNSSNVQSNLDHLVQDVREAVAMKAQEERGSMGSLVALNGFLSTLPSTVNHGQSDYVGFVGALRQLIAEVPQTLVYRTGPFYYFQTSRQGLQTVNLTKAFQNLSALWGVTTSAQTPMATAALLTPNTRLLLLLVAPFTDSRTVNGDTYLGHLLTLYREALRDARLDEITYSEIRDVARATGQDDSRALQSTLNFLVSQQTKRLPEDVFLTPQQTTVLRYLQKAIELQHAREPHERADRLLDAVVADLEPSFYSKHRHFITKLLDYFQRAAALNPHYFMSIVKNKHWTPPPGFYTGDFELPEVVHDSFQWDDTEDGAWSRPLAEQVNEEEPNTDYLAEYRSAFSDNREEKNQKKEWESLVDMMARWKTHRQSALDLDDEIEELSSTNPFKHLQPQF</sequence>
<comment type="function">
    <text evidence="3">Structural component of the virion that acts as a cement protein on the capsid exterior which mediates the interactions between the hexons, including the peripentonal hexons, and reaches all the way to the penton vertices. Two hexon linking proteins IIIa, one from each facet, stabilize the unique edge interface between a pair of facets. As the virus enters the host cell, hexon linking proteins IIIa are shed concomitant with virion acidification in the endosome. During virus assembly, seems to play a role in the serotype specificity of the packaging of viral DNA via its interaction with packaging protein 3.</text>
</comment>
<comment type="subunit">
    <text evidence="2 3">Interacts with hexon proteins; this interaction tethers the peripentonal hexons to hexons situated in the facet. Interacts with the penton protein (via N-terminus). Interacts with packaging protein 3; this interaction is required to promote correct genome packaging.</text>
</comment>
<comment type="subcellular location">
    <subcellularLocation>
        <location evidence="3">Virion</location>
    </subcellularLocation>
    <subcellularLocation>
        <location evidence="3">Host nucleus</location>
    </subcellularLocation>
    <text evidence="3">Surrounds the border of each facet on the capsid exterior. Present in around 60 copies per virion.</text>
</comment>
<comment type="induction">
    <text evidence="3">Expressed in the late phase of the viral replicative cycle.</text>
</comment>
<comment type="PTM">
    <text evidence="1 3">Cleaved near the C-terminus by the viral protease during virion maturation to form the mature protein.</text>
</comment>
<comment type="miscellaneous">
    <text evidence="3">All late proteins expressed from the major late promoter are produced by alternative splicing and alternative polyadenylation of the same gene giving rise to non-overlapping ORFs. A leader sequence is present in the N-terminus of all these mRNAs and is recognized by the viral shutoff protein to provide expression although conventional translation via ribosome scanning from the cap has been shut off in the host cell.</text>
</comment>
<comment type="similarity">
    <text evidence="3 4">Belongs to the adenoviridae hexon-linking protein IIIa family.</text>
</comment>
<feature type="chain" id="PRO_0000221840" description="Pre-hexon-linking protein IIIa" evidence="3">
    <location>
        <begin position="1"/>
        <end position="494"/>
    </location>
</feature>
<feature type="chain" id="PRO_0000439412" description="Hexon-linking protein IIIa" evidence="3">
    <location>
        <begin position="1"/>
        <end position="483"/>
    </location>
</feature>
<feature type="propeptide" id="PRO_0000439413" evidence="3">
    <location>
        <begin position="484"/>
        <end position="494"/>
    </location>
</feature>
<feature type="region of interest" description="Peripentonal hexon-tethering domain" evidence="3">
    <location>
        <begin position="1"/>
        <end position="101"/>
    </location>
</feature>
<feature type="region of interest" description="Binding to hexon-linking protein" evidence="3">
    <location>
        <begin position="132"/>
        <end position="245"/>
    </location>
</feature>
<feature type="site" description="Cleavage; by viral protease" evidence="3">
    <location>
        <begin position="483"/>
        <end position="484"/>
    </location>
</feature>
<feature type="modified residue" description="Phosphothreonine; by host" evidence="3">
    <location>
        <position position="268"/>
    </location>
</feature>
<feature type="modified residue" description="Phosphoserine; by host" evidence="3">
    <location>
        <position position="439"/>
    </location>
</feature>
<feature type="modified residue" description="Phosphoserine; by host" evidence="3">
    <location>
        <position position="456"/>
    </location>
</feature>
<gene>
    <name type="ORF">L1</name>
</gene>